<feature type="chain" id="PRO_0000151363" description="Ketol-acid reductoisomerase (NADP(+)) 1">
    <location>
        <begin position="1"/>
        <end position="332"/>
    </location>
</feature>
<feature type="domain" description="KARI N-terminal Rossmann" evidence="2">
    <location>
        <begin position="2"/>
        <end position="182"/>
    </location>
</feature>
<feature type="domain" description="KARI C-terminal knotted" evidence="3">
    <location>
        <begin position="183"/>
        <end position="328"/>
    </location>
</feature>
<feature type="active site" evidence="1">
    <location>
        <position position="108"/>
    </location>
</feature>
<feature type="binding site" evidence="1">
    <location>
        <begin position="25"/>
        <end position="28"/>
    </location>
    <ligand>
        <name>NADP(+)</name>
        <dbReference type="ChEBI" id="CHEBI:58349"/>
    </ligand>
</feature>
<feature type="binding site" evidence="1">
    <location>
        <position position="51"/>
    </location>
    <ligand>
        <name>NADP(+)</name>
        <dbReference type="ChEBI" id="CHEBI:58349"/>
    </ligand>
</feature>
<feature type="binding site" evidence="1">
    <location>
        <position position="53"/>
    </location>
    <ligand>
        <name>NADP(+)</name>
        <dbReference type="ChEBI" id="CHEBI:58349"/>
    </ligand>
</feature>
<feature type="binding site" evidence="1">
    <location>
        <begin position="83"/>
        <end position="86"/>
    </location>
    <ligand>
        <name>NADP(+)</name>
        <dbReference type="ChEBI" id="CHEBI:58349"/>
    </ligand>
</feature>
<feature type="binding site" evidence="1">
    <location>
        <position position="134"/>
    </location>
    <ligand>
        <name>NADP(+)</name>
        <dbReference type="ChEBI" id="CHEBI:58349"/>
    </ligand>
</feature>
<feature type="binding site" evidence="1">
    <location>
        <position position="191"/>
    </location>
    <ligand>
        <name>Mg(2+)</name>
        <dbReference type="ChEBI" id="CHEBI:18420"/>
        <label>1</label>
    </ligand>
</feature>
<feature type="binding site" evidence="1">
    <location>
        <position position="191"/>
    </location>
    <ligand>
        <name>Mg(2+)</name>
        <dbReference type="ChEBI" id="CHEBI:18420"/>
        <label>2</label>
    </ligand>
</feature>
<feature type="binding site" evidence="1">
    <location>
        <position position="195"/>
    </location>
    <ligand>
        <name>Mg(2+)</name>
        <dbReference type="ChEBI" id="CHEBI:18420"/>
        <label>1</label>
    </ligand>
</feature>
<feature type="binding site" evidence="1">
    <location>
        <position position="227"/>
    </location>
    <ligand>
        <name>Mg(2+)</name>
        <dbReference type="ChEBI" id="CHEBI:18420"/>
        <label>2</label>
    </ligand>
</feature>
<feature type="binding site" evidence="1">
    <location>
        <position position="231"/>
    </location>
    <ligand>
        <name>Mg(2+)</name>
        <dbReference type="ChEBI" id="CHEBI:18420"/>
        <label>2</label>
    </ligand>
</feature>
<feature type="binding site" evidence="1">
    <location>
        <position position="252"/>
    </location>
    <ligand>
        <name>substrate</name>
    </ligand>
</feature>
<dbReference type="EC" id="1.1.1.86" evidence="1"/>
<dbReference type="EMBL" id="AL939124">
    <property type="protein sequence ID" value="CAB37590.1"/>
    <property type="molecule type" value="Genomic_DNA"/>
</dbReference>
<dbReference type="PIR" id="T35830">
    <property type="entry name" value="T35830"/>
</dbReference>
<dbReference type="RefSeq" id="NP_629649.1">
    <property type="nucleotide sequence ID" value="NC_003888.3"/>
</dbReference>
<dbReference type="RefSeq" id="WP_003973482.1">
    <property type="nucleotide sequence ID" value="NZ_VNID01000011.1"/>
</dbReference>
<dbReference type="SMR" id="Q9Z565"/>
<dbReference type="FunCoup" id="Q9Z565">
    <property type="interactions" value="278"/>
</dbReference>
<dbReference type="STRING" id="100226.gene:17763166"/>
<dbReference type="PaxDb" id="100226-SCO5514"/>
<dbReference type="GeneID" id="91383519"/>
<dbReference type="KEGG" id="sco:SCO5514"/>
<dbReference type="PATRIC" id="fig|100226.15.peg.5601"/>
<dbReference type="eggNOG" id="COG0059">
    <property type="taxonomic scope" value="Bacteria"/>
</dbReference>
<dbReference type="HOGENOM" id="CLU_033821_0_1_11"/>
<dbReference type="InParanoid" id="Q9Z565"/>
<dbReference type="OrthoDB" id="9804088at2"/>
<dbReference type="PhylomeDB" id="Q9Z565"/>
<dbReference type="BRENDA" id="1.1.1.86">
    <property type="organism ID" value="5998"/>
</dbReference>
<dbReference type="UniPathway" id="UPA00047">
    <property type="reaction ID" value="UER00056"/>
</dbReference>
<dbReference type="UniPathway" id="UPA00049">
    <property type="reaction ID" value="UER00060"/>
</dbReference>
<dbReference type="Proteomes" id="UP000001973">
    <property type="component" value="Chromosome"/>
</dbReference>
<dbReference type="GO" id="GO:0005829">
    <property type="term" value="C:cytosol"/>
    <property type="evidence" value="ECO:0000318"/>
    <property type="project" value="GO_Central"/>
</dbReference>
<dbReference type="GO" id="GO:0004455">
    <property type="term" value="F:ketol-acid reductoisomerase activity"/>
    <property type="evidence" value="ECO:0000318"/>
    <property type="project" value="GO_Central"/>
</dbReference>
<dbReference type="GO" id="GO:0000287">
    <property type="term" value="F:magnesium ion binding"/>
    <property type="evidence" value="ECO:0007669"/>
    <property type="project" value="UniProtKB-UniRule"/>
</dbReference>
<dbReference type="GO" id="GO:0050661">
    <property type="term" value="F:NADP binding"/>
    <property type="evidence" value="ECO:0007669"/>
    <property type="project" value="InterPro"/>
</dbReference>
<dbReference type="GO" id="GO:0009097">
    <property type="term" value="P:isoleucine biosynthetic process"/>
    <property type="evidence" value="ECO:0000318"/>
    <property type="project" value="GO_Central"/>
</dbReference>
<dbReference type="GO" id="GO:0009099">
    <property type="term" value="P:L-valine biosynthetic process"/>
    <property type="evidence" value="ECO:0000318"/>
    <property type="project" value="GO_Central"/>
</dbReference>
<dbReference type="FunFam" id="3.40.50.720:FF:000023">
    <property type="entry name" value="Ketol-acid reductoisomerase (NADP(+))"/>
    <property type="match status" value="1"/>
</dbReference>
<dbReference type="Gene3D" id="6.10.240.10">
    <property type="match status" value="1"/>
</dbReference>
<dbReference type="Gene3D" id="3.40.50.720">
    <property type="entry name" value="NAD(P)-binding Rossmann-like Domain"/>
    <property type="match status" value="1"/>
</dbReference>
<dbReference type="HAMAP" id="MF_00435">
    <property type="entry name" value="IlvC"/>
    <property type="match status" value="1"/>
</dbReference>
<dbReference type="InterPro" id="IPR008927">
    <property type="entry name" value="6-PGluconate_DH-like_C_sf"/>
</dbReference>
<dbReference type="InterPro" id="IPR013023">
    <property type="entry name" value="KARI"/>
</dbReference>
<dbReference type="InterPro" id="IPR000506">
    <property type="entry name" value="KARI_C"/>
</dbReference>
<dbReference type="InterPro" id="IPR013116">
    <property type="entry name" value="KARI_N"/>
</dbReference>
<dbReference type="InterPro" id="IPR014359">
    <property type="entry name" value="KARI_prok"/>
</dbReference>
<dbReference type="InterPro" id="IPR036291">
    <property type="entry name" value="NAD(P)-bd_dom_sf"/>
</dbReference>
<dbReference type="NCBIfam" id="TIGR00465">
    <property type="entry name" value="ilvC"/>
    <property type="match status" value="1"/>
</dbReference>
<dbReference type="NCBIfam" id="NF004017">
    <property type="entry name" value="PRK05479.1"/>
    <property type="match status" value="1"/>
</dbReference>
<dbReference type="NCBIfam" id="NF009940">
    <property type="entry name" value="PRK13403.1"/>
    <property type="match status" value="1"/>
</dbReference>
<dbReference type="PANTHER" id="PTHR21371">
    <property type="entry name" value="KETOL-ACID REDUCTOISOMERASE, MITOCHONDRIAL"/>
    <property type="match status" value="1"/>
</dbReference>
<dbReference type="PANTHER" id="PTHR21371:SF1">
    <property type="entry name" value="KETOL-ACID REDUCTOISOMERASE, MITOCHONDRIAL"/>
    <property type="match status" value="1"/>
</dbReference>
<dbReference type="Pfam" id="PF01450">
    <property type="entry name" value="KARI_C"/>
    <property type="match status" value="1"/>
</dbReference>
<dbReference type="Pfam" id="PF07991">
    <property type="entry name" value="KARI_N"/>
    <property type="match status" value="1"/>
</dbReference>
<dbReference type="PIRSF" id="PIRSF000116">
    <property type="entry name" value="IlvC_gammaproteo"/>
    <property type="match status" value="1"/>
</dbReference>
<dbReference type="SUPFAM" id="SSF48179">
    <property type="entry name" value="6-phosphogluconate dehydrogenase C-terminal domain-like"/>
    <property type="match status" value="1"/>
</dbReference>
<dbReference type="SUPFAM" id="SSF51735">
    <property type="entry name" value="NAD(P)-binding Rossmann-fold domains"/>
    <property type="match status" value="1"/>
</dbReference>
<dbReference type="PROSITE" id="PS51851">
    <property type="entry name" value="KARI_C"/>
    <property type="match status" value="1"/>
</dbReference>
<dbReference type="PROSITE" id="PS51850">
    <property type="entry name" value="KARI_N"/>
    <property type="match status" value="1"/>
</dbReference>
<organism>
    <name type="scientific">Streptomyces coelicolor (strain ATCC BAA-471 / A3(2) / M145)</name>
    <dbReference type="NCBI Taxonomy" id="100226"/>
    <lineage>
        <taxon>Bacteria</taxon>
        <taxon>Bacillati</taxon>
        <taxon>Actinomycetota</taxon>
        <taxon>Actinomycetes</taxon>
        <taxon>Kitasatosporales</taxon>
        <taxon>Streptomycetaceae</taxon>
        <taxon>Streptomyces</taxon>
        <taxon>Streptomyces albidoflavus group</taxon>
    </lineage>
</organism>
<proteinExistence type="inferred from homology"/>
<reference key="1">
    <citation type="journal article" date="2002" name="Nature">
        <title>Complete genome sequence of the model actinomycete Streptomyces coelicolor A3(2).</title>
        <authorList>
            <person name="Bentley S.D."/>
            <person name="Chater K.F."/>
            <person name="Cerdeno-Tarraga A.-M."/>
            <person name="Challis G.L."/>
            <person name="Thomson N.R."/>
            <person name="James K.D."/>
            <person name="Harris D.E."/>
            <person name="Quail M.A."/>
            <person name="Kieser H."/>
            <person name="Harper D."/>
            <person name="Bateman A."/>
            <person name="Brown S."/>
            <person name="Chandra G."/>
            <person name="Chen C.W."/>
            <person name="Collins M."/>
            <person name="Cronin A."/>
            <person name="Fraser A."/>
            <person name="Goble A."/>
            <person name="Hidalgo J."/>
            <person name="Hornsby T."/>
            <person name="Howarth S."/>
            <person name="Huang C.-H."/>
            <person name="Kieser T."/>
            <person name="Larke L."/>
            <person name="Murphy L.D."/>
            <person name="Oliver K."/>
            <person name="O'Neil S."/>
            <person name="Rabbinowitsch E."/>
            <person name="Rajandream M.A."/>
            <person name="Rutherford K.M."/>
            <person name="Rutter S."/>
            <person name="Seeger K."/>
            <person name="Saunders D."/>
            <person name="Sharp S."/>
            <person name="Squares R."/>
            <person name="Squares S."/>
            <person name="Taylor K."/>
            <person name="Warren T."/>
            <person name="Wietzorrek A."/>
            <person name="Woodward J.R."/>
            <person name="Barrell B.G."/>
            <person name="Parkhill J."/>
            <person name="Hopwood D.A."/>
        </authorList>
    </citation>
    <scope>NUCLEOTIDE SEQUENCE [LARGE SCALE GENOMIC DNA]</scope>
    <source>
        <strain>ATCC BAA-471 / A3(2) / M145</strain>
    </source>
</reference>
<gene>
    <name evidence="1" type="primary">ilvC1</name>
    <name type="synonym">ilvC</name>
    <name type="ordered locus">SCO5514</name>
    <name type="ORF">SC8D9.26</name>
</gene>
<sequence>MAELFYDADADLSIIQGRKVAVIGYGSQGHAHALSLRDSGVDVRVGLHEGSKSKAKAEEQGLRVVPVAEAAAEADVIMILVPDPIQAEVYEKDIKDNLKDGDALFFGHGLNIRYGFIKPPAGVDVCMVAPKGPGHLVRRQYEEGRGVPCIAAVEQDATGNAFALALSYAKGIGGTRAGVIKTTFTEETETDLFGEQAVLCGGTAALVKAGFETLTEAGYQPEIAYFECLHELKLIVDLMYEGGLEKMRWSISETAEWGDYVTGPRIITDATKAEMKKVLAEIQDGTFAKNWMDEYHGGLKKYNEYKKQDSEHLLETTGKELRKLMSWVDEEA</sequence>
<comment type="function">
    <text evidence="1">Involved in the biosynthesis of branched-chain amino acids (BCAA). Catalyzes an alkyl-migration followed by a ketol-acid reduction of (S)-2-acetolactate (S2AL) to yield (R)-2,3-dihydroxy-isovalerate. In the isomerase reaction, S2AL is rearranged via a Mg-dependent methyl migration to produce 3-hydroxy-3-methyl-2-ketobutyrate (HMKB). In the reductase reaction, this 2-ketoacid undergoes a metal-dependent reduction by NADPH to yield (R)-2,3-dihydroxy-isovalerate.</text>
</comment>
<comment type="catalytic activity">
    <reaction evidence="1">
        <text>(2R)-2,3-dihydroxy-3-methylbutanoate + NADP(+) = (2S)-2-acetolactate + NADPH + H(+)</text>
        <dbReference type="Rhea" id="RHEA:22068"/>
        <dbReference type="ChEBI" id="CHEBI:15378"/>
        <dbReference type="ChEBI" id="CHEBI:49072"/>
        <dbReference type="ChEBI" id="CHEBI:57783"/>
        <dbReference type="ChEBI" id="CHEBI:58349"/>
        <dbReference type="ChEBI" id="CHEBI:58476"/>
        <dbReference type="EC" id="1.1.1.86"/>
    </reaction>
</comment>
<comment type="catalytic activity">
    <reaction evidence="1">
        <text>(2R,3R)-2,3-dihydroxy-3-methylpentanoate + NADP(+) = (S)-2-ethyl-2-hydroxy-3-oxobutanoate + NADPH + H(+)</text>
        <dbReference type="Rhea" id="RHEA:13493"/>
        <dbReference type="ChEBI" id="CHEBI:15378"/>
        <dbReference type="ChEBI" id="CHEBI:49256"/>
        <dbReference type="ChEBI" id="CHEBI:49258"/>
        <dbReference type="ChEBI" id="CHEBI:57783"/>
        <dbReference type="ChEBI" id="CHEBI:58349"/>
        <dbReference type="EC" id="1.1.1.86"/>
    </reaction>
</comment>
<comment type="cofactor">
    <cofactor evidence="1">
        <name>Mg(2+)</name>
        <dbReference type="ChEBI" id="CHEBI:18420"/>
    </cofactor>
    <text evidence="1">Binds 2 magnesium ions per subunit.</text>
</comment>
<comment type="pathway">
    <text evidence="1">Amino-acid biosynthesis; L-isoleucine biosynthesis; L-isoleucine from 2-oxobutanoate: step 2/4.</text>
</comment>
<comment type="pathway">
    <text evidence="1">Amino-acid biosynthesis; L-valine biosynthesis; L-valine from pyruvate: step 2/4.</text>
</comment>
<comment type="similarity">
    <text evidence="1">Belongs to the ketol-acid reductoisomerase family.</text>
</comment>
<protein>
    <recommendedName>
        <fullName evidence="1">Ketol-acid reductoisomerase (NADP(+)) 1</fullName>
        <shortName evidence="1">KARI 1</shortName>
        <ecNumber evidence="1">1.1.1.86</ecNumber>
    </recommendedName>
    <alternativeName>
        <fullName evidence="1">Acetohydroxy-acid isomeroreductase 1</fullName>
        <shortName evidence="1">AHIR 1</shortName>
    </alternativeName>
    <alternativeName>
        <fullName evidence="1">Alpha-keto-beta-hydroxylacyl reductoisomerase 1</fullName>
    </alternativeName>
    <alternativeName>
        <fullName evidence="1">Ketol-acid reductoisomerase type 1</fullName>
    </alternativeName>
    <alternativeName>
        <fullName evidence="1">Ketol-acid reductoisomerase type I</fullName>
    </alternativeName>
</protein>
<accession>Q9Z565</accession>
<keyword id="KW-0028">Amino-acid biosynthesis</keyword>
<keyword id="KW-0100">Branched-chain amino acid biosynthesis</keyword>
<keyword id="KW-0460">Magnesium</keyword>
<keyword id="KW-0479">Metal-binding</keyword>
<keyword id="KW-0521">NADP</keyword>
<keyword id="KW-0560">Oxidoreductase</keyword>
<keyword id="KW-1185">Reference proteome</keyword>
<name>ILVC1_STRCO</name>
<evidence type="ECO:0000255" key="1">
    <source>
        <dbReference type="HAMAP-Rule" id="MF_00435"/>
    </source>
</evidence>
<evidence type="ECO:0000255" key="2">
    <source>
        <dbReference type="PROSITE-ProRule" id="PRU01197"/>
    </source>
</evidence>
<evidence type="ECO:0000255" key="3">
    <source>
        <dbReference type="PROSITE-ProRule" id="PRU01198"/>
    </source>
</evidence>